<organism>
    <name type="scientific">Nitratidesulfovibrio vulgaris</name>
    <name type="common">Desulfovibrio vulgaris</name>
    <dbReference type="NCBI Taxonomy" id="881"/>
    <lineage>
        <taxon>Bacteria</taxon>
        <taxon>Pseudomonadati</taxon>
        <taxon>Thermodesulfobacteriota</taxon>
        <taxon>Desulfovibrionia</taxon>
        <taxon>Desulfovibrionales</taxon>
        <taxon>Desulfovibrionaceae</taxon>
        <taxon>Nitratidesulfovibrio</taxon>
    </lineage>
</organism>
<feature type="chain" id="PRO_0000108363" description="Cytochrome c3-2">
    <location>
        <begin position="1" status="less than"/>
        <end position="24" status="greater than"/>
    </location>
</feature>
<feature type="region of interest" description="Disordered" evidence="3">
    <location>
        <begin position="1"/>
        <end position="24"/>
    </location>
</feature>
<feature type="non-terminal residue" evidence="5">
    <location>
        <position position="1"/>
    </location>
</feature>
<feature type="non-terminal residue" evidence="5">
    <location>
        <position position="24"/>
    </location>
</feature>
<reference evidence="6" key="1">
    <citation type="journal article" date="1993" name="Can. J. Microbiol.">
        <title>Rapid comparison of the cytochrome c3 gene from nine strains of Desulfovibrio vulgaris using polymerase chain reaction amplification.</title>
        <authorList>
            <person name="Kwoh D.Y."/>
            <person name="Vedvick T.S."/>
            <person name="McCue A.F."/>
            <person name="Gevertz D."/>
        </authorList>
    </citation>
    <scope>PROTEIN SEQUENCE</scope>
    <source>
        <strain evidence="4">DSM 1744 / 5570</strain>
    </source>
</reference>
<dbReference type="GO" id="GO:0042597">
    <property type="term" value="C:periplasmic space"/>
    <property type="evidence" value="ECO:0007669"/>
    <property type="project" value="UniProtKB-SubCell"/>
</dbReference>
<dbReference type="GO" id="GO:0046872">
    <property type="term" value="F:metal ion binding"/>
    <property type="evidence" value="ECO:0007669"/>
    <property type="project" value="UniProtKB-KW"/>
</dbReference>
<dbReference type="GO" id="GO:0009061">
    <property type="term" value="P:anaerobic respiration"/>
    <property type="evidence" value="ECO:0007669"/>
    <property type="project" value="UniProtKB-KW"/>
</dbReference>
<evidence type="ECO:0000250" key="1"/>
<evidence type="ECO:0000250" key="2">
    <source>
        <dbReference type="UniProtKB" id="P00134"/>
    </source>
</evidence>
<evidence type="ECO:0000256" key="3">
    <source>
        <dbReference type="SAM" id="MobiDB-lite"/>
    </source>
</evidence>
<evidence type="ECO:0000269" key="4">
    <source>
    </source>
</evidence>
<evidence type="ECO:0000303" key="5">
    <source>
    </source>
</evidence>
<evidence type="ECO:0000305" key="6"/>
<accession>P81151</accession>
<keyword id="KW-0903">Direct protein sequencing</keyword>
<keyword id="KW-0249">Electron transport</keyword>
<keyword id="KW-0349">Heme</keyword>
<keyword id="KW-0408">Iron</keyword>
<keyword id="KW-0479">Metal-binding</keyword>
<keyword id="KW-0574">Periplasm</keyword>
<keyword id="KW-0763">Sulfate respiration</keyword>
<keyword id="KW-0813">Transport</keyword>
<proteinExistence type="evidence at protein level"/>
<sequence length="24" mass="2355">GNAPAADMVLKAPGDAKMTKTAVP</sequence>
<protein>
    <recommendedName>
        <fullName>Cytochrome c3-2</fullName>
    </recommendedName>
</protein>
<comment type="function">
    <text evidence="2">Participates in sulfate respiration coupled with phosphorylation by transferring electrons from the enzyme dehydrogenase to ferredoxin.</text>
</comment>
<comment type="subcellular location">
    <subcellularLocation>
        <location evidence="1">Periplasm</location>
    </subcellularLocation>
</comment>
<comment type="PTM">
    <text evidence="2">Binds 4 heme groups per subunit.</text>
</comment>
<name>CYC32_NITVL</name>